<keyword id="KW-0997">Cell inner membrane</keyword>
<keyword id="KW-1003">Cell membrane</keyword>
<keyword id="KW-0868">Chloride</keyword>
<keyword id="KW-0869">Chloride channel</keyword>
<keyword id="KW-0407">Ion channel</keyword>
<keyword id="KW-0406">Ion transport</keyword>
<keyword id="KW-0472">Membrane</keyword>
<keyword id="KW-1185">Reference proteome</keyword>
<keyword id="KW-0812">Transmembrane</keyword>
<keyword id="KW-1133">Transmembrane helix</keyword>
<keyword id="KW-0813">Transport</keyword>
<keyword id="KW-0851">Voltage-gated channel</keyword>
<feature type="chain" id="PRO_1000164647" description="Voltage-gated ClC-type chloride channel ClcB">
    <location>
        <begin position="1"/>
        <end position="418"/>
    </location>
</feature>
<feature type="transmembrane region" description="Helical" evidence="1">
    <location>
        <begin position="5"/>
        <end position="25"/>
    </location>
</feature>
<feature type="transmembrane region" description="Helical" evidence="1">
    <location>
        <begin position="54"/>
        <end position="74"/>
    </location>
</feature>
<feature type="transmembrane region" description="Helical" evidence="1">
    <location>
        <begin position="146"/>
        <end position="166"/>
    </location>
</feature>
<feature type="transmembrane region" description="Helical" evidence="1">
    <location>
        <begin position="168"/>
        <end position="188"/>
    </location>
</feature>
<feature type="transmembrane region" description="Helical" evidence="1">
    <location>
        <begin position="222"/>
        <end position="242"/>
    </location>
</feature>
<feature type="transmembrane region" description="Helical" evidence="1">
    <location>
        <begin position="258"/>
        <end position="278"/>
    </location>
</feature>
<feature type="transmembrane region" description="Helical" evidence="1">
    <location>
        <begin position="291"/>
        <end position="311"/>
    </location>
</feature>
<feature type="transmembrane region" description="Helical" evidence="1">
    <location>
        <begin position="316"/>
        <end position="336"/>
    </location>
</feature>
<feature type="transmembrane region" description="Helical" evidence="1">
    <location>
        <begin position="352"/>
        <end position="372"/>
    </location>
</feature>
<feature type="transmembrane region" description="Helical" evidence="1">
    <location>
        <begin position="380"/>
        <end position="400"/>
    </location>
</feature>
<gene>
    <name evidence="1" type="primary">clcB</name>
    <name type="ordered locus">EC55989_1757</name>
</gene>
<comment type="function">
    <text evidence="1">Probably acts as an electrical shunt for an outwardly-directed proton pump that is linked to amino acid decarboxylation, as part of the extreme acid resistance (XAR) response.</text>
</comment>
<comment type="subcellular location">
    <subcellularLocation>
        <location evidence="1">Cell inner membrane</location>
        <topology evidence="1">Multi-pass membrane protein</topology>
    </subcellularLocation>
</comment>
<comment type="similarity">
    <text evidence="1">Belongs to the chloride channel (TC 2.A.49) family. ClcB subfamily.</text>
</comment>
<name>CLCB_ECO55</name>
<reference key="1">
    <citation type="journal article" date="2009" name="PLoS Genet.">
        <title>Organised genome dynamics in the Escherichia coli species results in highly diverse adaptive paths.</title>
        <authorList>
            <person name="Touchon M."/>
            <person name="Hoede C."/>
            <person name="Tenaillon O."/>
            <person name="Barbe V."/>
            <person name="Baeriswyl S."/>
            <person name="Bidet P."/>
            <person name="Bingen E."/>
            <person name="Bonacorsi S."/>
            <person name="Bouchier C."/>
            <person name="Bouvet O."/>
            <person name="Calteau A."/>
            <person name="Chiapello H."/>
            <person name="Clermont O."/>
            <person name="Cruveiller S."/>
            <person name="Danchin A."/>
            <person name="Diard M."/>
            <person name="Dossat C."/>
            <person name="Karoui M.E."/>
            <person name="Frapy E."/>
            <person name="Garry L."/>
            <person name="Ghigo J.M."/>
            <person name="Gilles A.M."/>
            <person name="Johnson J."/>
            <person name="Le Bouguenec C."/>
            <person name="Lescat M."/>
            <person name="Mangenot S."/>
            <person name="Martinez-Jehanne V."/>
            <person name="Matic I."/>
            <person name="Nassif X."/>
            <person name="Oztas S."/>
            <person name="Petit M.A."/>
            <person name="Pichon C."/>
            <person name="Rouy Z."/>
            <person name="Ruf C.S."/>
            <person name="Schneider D."/>
            <person name="Tourret J."/>
            <person name="Vacherie B."/>
            <person name="Vallenet D."/>
            <person name="Medigue C."/>
            <person name="Rocha E.P.C."/>
            <person name="Denamur E."/>
        </authorList>
    </citation>
    <scope>NUCLEOTIDE SEQUENCE [LARGE SCALE GENOMIC DNA]</scope>
    <source>
        <strain>55989 / EAEC</strain>
    </source>
</reference>
<protein>
    <recommendedName>
        <fullName evidence="1">Voltage-gated ClC-type chloride channel ClcB</fullName>
    </recommendedName>
</protein>
<sequence length="418" mass="44172">MFRRLLIATVVGILAAFAVAGFRHAMLLLEWLFLNNDSGSLVNAATNLSPWRRLLTPALGGLAAGLLLMGWQKFTQQRPHAPTDYMEALQTDGQFDYAASLVKSLASLLVVTSGSAIGREGAMILLAALAASCFAQRFTPRQEWKLWIACGAAAGMAAAYRAPLAGSLFIAEVLFGTMMLASLGPVIISAVVALLVSNLINHSDALLYNVQLSVTVQARDYALIISTGVLAGLCGPLLLTLMNACHRGFVSLKLAPPWQLALGGLIVGLLSLFTPAVWGNGYSTVQSFLTAPPLLMIIAGIFLCKLCAVLASSGSGAPGGVFTPTLFIGLAIGMLYGRSLGLWFPDGEEITLLLGLTGMATLLAATTHAPIMSTLMICEMTGEYQLLPGLLIACVIASVISRTLHRDSIYRQHTAQHS</sequence>
<evidence type="ECO:0000255" key="1">
    <source>
        <dbReference type="HAMAP-Rule" id="MF_01203"/>
    </source>
</evidence>
<organism>
    <name type="scientific">Escherichia coli (strain 55989 / EAEC)</name>
    <dbReference type="NCBI Taxonomy" id="585055"/>
    <lineage>
        <taxon>Bacteria</taxon>
        <taxon>Pseudomonadati</taxon>
        <taxon>Pseudomonadota</taxon>
        <taxon>Gammaproteobacteria</taxon>
        <taxon>Enterobacterales</taxon>
        <taxon>Enterobacteriaceae</taxon>
        <taxon>Escherichia</taxon>
    </lineage>
</organism>
<dbReference type="EMBL" id="CU928145">
    <property type="protein sequence ID" value="CAU97611.1"/>
    <property type="molecule type" value="Genomic_DNA"/>
</dbReference>
<dbReference type="SMR" id="B7L5E4"/>
<dbReference type="KEGG" id="eck:EC55989_1757"/>
<dbReference type="HOGENOM" id="CLU_015263_5_2_6"/>
<dbReference type="Proteomes" id="UP000000746">
    <property type="component" value="Chromosome"/>
</dbReference>
<dbReference type="GO" id="GO:0034707">
    <property type="term" value="C:chloride channel complex"/>
    <property type="evidence" value="ECO:0007669"/>
    <property type="project" value="UniProtKB-KW"/>
</dbReference>
<dbReference type="GO" id="GO:0005886">
    <property type="term" value="C:plasma membrane"/>
    <property type="evidence" value="ECO:0007669"/>
    <property type="project" value="UniProtKB-SubCell"/>
</dbReference>
<dbReference type="GO" id="GO:0005247">
    <property type="term" value="F:voltage-gated chloride channel activity"/>
    <property type="evidence" value="ECO:0007669"/>
    <property type="project" value="UniProtKB-UniRule"/>
</dbReference>
<dbReference type="GO" id="GO:0010447">
    <property type="term" value="P:response to acidic pH"/>
    <property type="evidence" value="ECO:0007669"/>
    <property type="project" value="InterPro"/>
</dbReference>
<dbReference type="CDD" id="cd00400">
    <property type="entry name" value="Voltage_gated_ClC"/>
    <property type="match status" value="1"/>
</dbReference>
<dbReference type="FunFam" id="1.10.3080.10:FF:000010">
    <property type="entry name" value="Voltage-gated ClC-type chloride channel ClcB"/>
    <property type="match status" value="1"/>
</dbReference>
<dbReference type="Gene3D" id="1.10.3080.10">
    <property type="entry name" value="Clc chloride channel"/>
    <property type="match status" value="1"/>
</dbReference>
<dbReference type="HAMAP" id="MF_01203">
    <property type="entry name" value="CLC_ClcB"/>
    <property type="match status" value="1"/>
</dbReference>
<dbReference type="InterPro" id="IPR014743">
    <property type="entry name" value="Cl-channel_core"/>
</dbReference>
<dbReference type="InterPro" id="IPR023790">
    <property type="entry name" value="Cl-channel_volt-gated_ClcB"/>
</dbReference>
<dbReference type="InterPro" id="IPR001807">
    <property type="entry name" value="ClC"/>
</dbReference>
<dbReference type="InterPro" id="IPR050368">
    <property type="entry name" value="ClC-type_chloride_channel"/>
</dbReference>
<dbReference type="NCBIfam" id="NF002437">
    <property type="entry name" value="PRK01610.1"/>
    <property type="match status" value="1"/>
</dbReference>
<dbReference type="PANTHER" id="PTHR43427">
    <property type="entry name" value="CHLORIDE CHANNEL PROTEIN CLC-E"/>
    <property type="match status" value="1"/>
</dbReference>
<dbReference type="PANTHER" id="PTHR43427:SF6">
    <property type="entry name" value="CHLORIDE CHANNEL PROTEIN CLC-E"/>
    <property type="match status" value="1"/>
</dbReference>
<dbReference type="Pfam" id="PF00654">
    <property type="entry name" value="Voltage_CLC"/>
    <property type="match status" value="1"/>
</dbReference>
<dbReference type="PRINTS" id="PR00762">
    <property type="entry name" value="CLCHANNEL"/>
</dbReference>
<dbReference type="SUPFAM" id="SSF81340">
    <property type="entry name" value="Clc chloride channel"/>
    <property type="match status" value="1"/>
</dbReference>
<proteinExistence type="inferred from homology"/>
<accession>B7L5E4</accession>